<dbReference type="EC" id="1.6.5.-" evidence="1"/>
<dbReference type="EC" id="1.7.1.17" evidence="1"/>
<dbReference type="EMBL" id="CP000001">
    <property type="protein sequence ID" value="AAU20238.1"/>
    <property type="molecule type" value="Genomic_DNA"/>
</dbReference>
<dbReference type="RefSeq" id="WP_000170052.1">
    <property type="nucleotide sequence ID" value="NC_006274.1"/>
</dbReference>
<dbReference type="SMR" id="Q630J1"/>
<dbReference type="KEGG" id="bcz:BCE33L5107"/>
<dbReference type="PATRIC" id="fig|288681.22.peg.234"/>
<dbReference type="Proteomes" id="UP000002612">
    <property type="component" value="Chromosome"/>
</dbReference>
<dbReference type="GO" id="GO:0009055">
    <property type="term" value="F:electron transfer activity"/>
    <property type="evidence" value="ECO:0007669"/>
    <property type="project" value="UniProtKB-UniRule"/>
</dbReference>
<dbReference type="GO" id="GO:0010181">
    <property type="term" value="F:FMN binding"/>
    <property type="evidence" value="ECO:0007669"/>
    <property type="project" value="UniProtKB-UniRule"/>
</dbReference>
<dbReference type="GO" id="GO:0016652">
    <property type="term" value="F:oxidoreductase activity, acting on NAD(P)H as acceptor"/>
    <property type="evidence" value="ECO:0007669"/>
    <property type="project" value="UniProtKB-UniRule"/>
</dbReference>
<dbReference type="GO" id="GO:0016655">
    <property type="term" value="F:oxidoreductase activity, acting on NAD(P)H, quinone or similar compound as acceptor"/>
    <property type="evidence" value="ECO:0007669"/>
    <property type="project" value="InterPro"/>
</dbReference>
<dbReference type="Gene3D" id="3.40.50.360">
    <property type="match status" value="1"/>
</dbReference>
<dbReference type="HAMAP" id="MF_01216">
    <property type="entry name" value="Azoreductase_type1"/>
    <property type="match status" value="1"/>
</dbReference>
<dbReference type="InterPro" id="IPR003680">
    <property type="entry name" value="Flavodoxin_fold"/>
</dbReference>
<dbReference type="InterPro" id="IPR029039">
    <property type="entry name" value="Flavoprotein-like_sf"/>
</dbReference>
<dbReference type="InterPro" id="IPR050104">
    <property type="entry name" value="FMN-dep_NADH:Q_OxRdtase_AzoR1"/>
</dbReference>
<dbReference type="InterPro" id="IPR023048">
    <property type="entry name" value="NADH:quinone_OxRdtase_FMN_depd"/>
</dbReference>
<dbReference type="NCBIfam" id="NF010075">
    <property type="entry name" value="PRK13556.1"/>
    <property type="match status" value="1"/>
</dbReference>
<dbReference type="PANTHER" id="PTHR43741">
    <property type="entry name" value="FMN-DEPENDENT NADH-AZOREDUCTASE 1"/>
    <property type="match status" value="1"/>
</dbReference>
<dbReference type="PANTHER" id="PTHR43741:SF4">
    <property type="entry name" value="FMN-DEPENDENT NADH:QUINONE OXIDOREDUCTASE"/>
    <property type="match status" value="1"/>
</dbReference>
<dbReference type="Pfam" id="PF02525">
    <property type="entry name" value="Flavodoxin_2"/>
    <property type="match status" value="1"/>
</dbReference>
<dbReference type="SUPFAM" id="SSF52218">
    <property type="entry name" value="Flavoproteins"/>
    <property type="match status" value="1"/>
</dbReference>
<organism>
    <name type="scientific">Bacillus cereus (strain ZK / E33L)</name>
    <dbReference type="NCBI Taxonomy" id="288681"/>
    <lineage>
        <taxon>Bacteria</taxon>
        <taxon>Bacillati</taxon>
        <taxon>Bacillota</taxon>
        <taxon>Bacilli</taxon>
        <taxon>Bacillales</taxon>
        <taxon>Bacillaceae</taxon>
        <taxon>Bacillus</taxon>
        <taxon>Bacillus cereus group</taxon>
    </lineage>
</organism>
<reference key="1">
    <citation type="journal article" date="2006" name="J. Bacteriol.">
        <title>Pathogenomic sequence analysis of Bacillus cereus and Bacillus thuringiensis isolates closely related to Bacillus anthracis.</title>
        <authorList>
            <person name="Han C.S."/>
            <person name="Xie G."/>
            <person name="Challacombe J.F."/>
            <person name="Altherr M.R."/>
            <person name="Bhotika S.S."/>
            <person name="Bruce D."/>
            <person name="Campbell C.S."/>
            <person name="Campbell M.L."/>
            <person name="Chen J."/>
            <person name="Chertkov O."/>
            <person name="Cleland C."/>
            <person name="Dimitrijevic M."/>
            <person name="Doggett N.A."/>
            <person name="Fawcett J.J."/>
            <person name="Glavina T."/>
            <person name="Goodwin L.A."/>
            <person name="Hill K.K."/>
            <person name="Hitchcock P."/>
            <person name="Jackson P.J."/>
            <person name="Keim P."/>
            <person name="Kewalramani A.R."/>
            <person name="Longmire J."/>
            <person name="Lucas S."/>
            <person name="Malfatti S."/>
            <person name="McMurry K."/>
            <person name="Meincke L.J."/>
            <person name="Misra M."/>
            <person name="Moseman B.L."/>
            <person name="Mundt M."/>
            <person name="Munk A.C."/>
            <person name="Okinaka R.T."/>
            <person name="Parson-Quintana B."/>
            <person name="Reilly L.P."/>
            <person name="Richardson P."/>
            <person name="Robinson D.L."/>
            <person name="Rubin E."/>
            <person name="Saunders E."/>
            <person name="Tapia R."/>
            <person name="Tesmer J.G."/>
            <person name="Thayer N."/>
            <person name="Thompson L.S."/>
            <person name="Tice H."/>
            <person name="Ticknor L.O."/>
            <person name="Wills P.L."/>
            <person name="Brettin T.S."/>
            <person name="Gilna P."/>
        </authorList>
    </citation>
    <scope>NUCLEOTIDE SEQUENCE [LARGE SCALE GENOMIC DNA]</scope>
    <source>
        <strain>ZK / E33L</strain>
    </source>
</reference>
<keyword id="KW-0285">Flavoprotein</keyword>
<keyword id="KW-0288">FMN</keyword>
<keyword id="KW-0520">NAD</keyword>
<keyword id="KW-0560">Oxidoreductase</keyword>
<feature type="chain" id="PRO_0000245887" description="FMN-dependent NADH:quinone oxidoreductase 4">
    <location>
        <begin position="1"/>
        <end position="208"/>
    </location>
</feature>
<protein>
    <recommendedName>
        <fullName evidence="1">FMN-dependent NADH:quinone oxidoreductase 4</fullName>
        <ecNumber evidence="1">1.6.5.-</ecNumber>
    </recommendedName>
    <alternativeName>
        <fullName evidence="1">Azo-dye reductase 4</fullName>
    </alternativeName>
    <alternativeName>
        <fullName evidence="1">FMN-dependent NADH-azo compound oxidoreductase 4</fullName>
    </alternativeName>
    <alternativeName>
        <fullName evidence="1">FMN-dependent NADH-azoreductase 4</fullName>
        <ecNumber evidence="1">1.7.1.17</ecNumber>
    </alternativeName>
</protein>
<gene>
    <name evidence="1" type="primary">azoR4</name>
    <name type="ordered locus">BCE33L5107</name>
</gene>
<sequence>MTKVLFVKANNRPAEQAVSVKLYEAFLASYKEAHPNDTVVELDLYKEELPYVGVDMINGTFKAGKGFDLTEEEAKAVAVADKYLNQFLEADKVVFGFPLWNLTIPAVLHTYIDYLNRAGKTFKYTPEGPVGLIGDKKIALLNARGGVYSEGPAAGAEMAVKYVATMMGFFGATNMETIVIEGHNQFPDKAEEIITAGLEEAAKVANKF</sequence>
<proteinExistence type="inferred from homology"/>
<accession>Q630J1</accession>
<comment type="function">
    <text evidence="1">Quinone reductase that provides resistance to thiol-specific stress caused by electrophilic quinones.</text>
</comment>
<comment type="function">
    <text evidence="1">Also exhibits azoreductase activity. Catalyzes the reductive cleavage of the azo bond in aromatic azo compounds to the corresponding amines.</text>
</comment>
<comment type="catalytic activity">
    <reaction evidence="1">
        <text>2 a quinone + NADH + H(+) = 2 a 1,4-benzosemiquinone + NAD(+)</text>
        <dbReference type="Rhea" id="RHEA:65952"/>
        <dbReference type="ChEBI" id="CHEBI:15378"/>
        <dbReference type="ChEBI" id="CHEBI:57540"/>
        <dbReference type="ChEBI" id="CHEBI:57945"/>
        <dbReference type="ChEBI" id="CHEBI:132124"/>
        <dbReference type="ChEBI" id="CHEBI:134225"/>
    </reaction>
</comment>
<comment type="catalytic activity">
    <reaction evidence="1">
        <text>N,N-dimethyl-1,4-phenylenediamine + anthranilate + 2 NAD(+) = 2-(4-dimethylaminophenyl)diazenylbenzoate + 2 NADH + 2 H(+)</text>
        <dbReference type="Rhea" id="RHEA:55872"/>
        <dbReference type="ChEBI" id="CHEBI:15378"/>
        <dbReference type="ChEBI" id="CHEBI:15783"/>
        <dbReference type="ChEBI" id="CHEBI:16567"/>
        <dbReference type="ChEBI" id="CHEBI:57540"/>
        <dbReference type="ChEBI" id="CHEBI:57945"/>
        <dbReference type="ChEBI" id="CHEBI:71579"/>
        <dbReference type="EC" id="1.7.1.17"/>
    </reaction>
</comment>
<comment type="cofactor">
    <cofactor evidence="1">
        <name>FMN</name>
        <dbReference type="ChEBI" id="CHEBI:58210"/>
    </cofactor>
    <text evidence="1">Binds 1 FMN per subunit.</text>
</comment>
<comment type="subunit">
    <text evidence="1">Homodimer.</text>
</comment>
<comment type="similarity">
    <text evidence="1">Belongs to the azoreductase type 1 family.</text>
</comment>
<name>AZOR4_BACCZ</name>
<evidence type="ECO:0000255" key="1">
    <source>
        <dbReference type="HAMAP-Rule" id="MF_01216"/>
    </source>
</evidence>